<keyword id="KW-0687">Ribonucleoprotein</keyword>
<keyword id="KW-0689">Ribosomal protein</keyword>
<name>RL28_BRUMB</name>
<sequence length="97" mass="10869">MSRACELTGKSVQYGNNVSHANNRTRRRFLPNLCNVTLISETLGQSYRLRISANALRSVEHRGGLDAFLVKSDDKELSQRARLLKRQIAKKQAEAAA</sequence>
<reference key="1">
    <citation type="submission" date="2009-03" db="EMBL/GenBank/DDBJ databases">
        <title>Brucella melitensis ATCC 23457 whole genome shotgun sequencing project.</title>
        <authorList>
            <person name="Setubal J.C."/>
            <person name="Boyle S."/>
            <person name="Crasta O.R."/>
            <person name="Gillespie J.J."/>
            <person name="Kenyon R.W."/>
            <person name="Lu J."/>
            <person name="Mane S."/>
            <person name="Nagrani S."/>
            <person name="Shallom J.M."/>
            <person name="Shallom S."/>
            <person name="Shukla M."/>
            <person name="Snyder E.E."/>
            <person name="Sobral B.W."/>
            <person name="Wattam A.R."/>
            <person name="Will R."/>
            <person name="Williams K."/>
            <person name="Yoo H."/>
            <person name="Munk C."/>
            <person name="Tapia R."/>
            <person name="Han C."/>
            <person name="Detter J.C."/>
            <person name="Bruce D."/>
            <person name="Brettin T.S."/>
        </authorList>
    </citation>
    <scope>NUCLEOTIDE SEQUENCE [LARGE SCALE GENOMIC DNA]</scope>
    <source>
        <strain>ATCC 23457</strain>
    </source>
</reference>
<protein>
    <recommendedName>
        <fullName evidence="1">Large ribosomal subunit protein bL28</fullName>
    </recommendedName>
    <alternativeName>
        <fullName evidence="2">50S ribosomal protein L28</fullName>
    </alternativeName>
</protein>
<proteinExistence type="inferred from homology"/>
<dbReference type="EMBL" id="CP001488">
    <property type="protein sequence ID" value="ACO01728.1"/>
    <property type="molecule type" value="Genomic_DNA"/>
</dbReference>
<dbReference type="RefSeq" id="WP_002965079.1">
    <property type="nucleotide sequence ID" value="NC_012441.1"/>
</dbReference>
<dbReference type="SMR" id="C0RFQ6"/>
<dbReference type="GeneID" id="97534716"/>
<dbReference type="KEGG" id="bmi:BMEA_A2075"/>
<dbReference type="HOGENOM" id="CLU_064548_4_2_5"/>
<dbReference type="Proteomes" id="UP000001748">
    <property type="component" value="Chromosome I"/>
</dbReference>
<dbReference type="GO" id="GO:0022625">
    <property type="term" value="C:cytosolic large ribosomal subunit"/>
    <property type="evidence" value="ECO:0007669"/>
    <property type="project" value="TreeGrafter"/>
</dbReference>
<dbReference type="GO" id="GO:0003735">
    <property type="term" value="F:structural constituent of ribosome"/>
    <property type="evidence" value="ECO:0007669"/>
    <property type="project" value="InterPro"/>
</dbReference>
<dbReference type="GO" id="GO:0006412">
    <property type="term" value="P:translation"/>
    <property type="evidence" value="ECO:0007669"/>
    <property type="project" value="UniProtKB-UniRule"/>
</dbReference>
<dbReference type="Gene3D" id="2.30.170.40">
    <property type="entry name" value="Ribosomal protein L28/L24"/>
    <property type="match status" value="1"/>
</dbReference>
<dbReference type="HAMAP" id="MF_00373">
    <property type="entry name" value="Ribosomal_bL28"/>
    <property type="match status" value="1"/>
</dbReference>
<dbReference type="InterPro" id="IPR026569">
    <property type="entry name" value="Ribosomal_bL28"/>
</dbReference>
<dbReference type="InterPro" id="IPR034704">
    <property type="entry name" value="Ribosomal_bL28/bL31-like_sf"/>
</dbReference>
<dbReference type="InterPro" id="IPR001383">
    <property type="entry name" value="Ribosomal_bL28_bact-type"/>
</dbReference>
<dbReference type="InterPro" id="IPR037147">
    <property type="entry name" value="Ribosomal_bL28_sf"/>
</dbReference>
<dbReference type="NCBIfam" id="TIGR00009">
    <property type="entry name" value="L28"/>
    <property type="match status" value="1"/>
</dbReference>
<dbReference type="PANTHER" id="PTHR13528">
    <property type="entry name" value="39S RIBOSOMAL PROTEIN L28, MITOCHONDRIAL"/>
    <property type="match status" value="1"/>
</dbReference>
<dbReference type="PANTHER" id="PTHR13528:SF2">
    <property type="entry name" value="LARGE RIBOSOMAL SUBUNIT PROTEIN BL28M"/>
    <property type="match status" value="1"/>
</dbReference>
<dbReference type="Pfam" id="PF00830">
    <property type="entry name" value="Ribosomal_L28"/>
    <property type="match status" value="1"/>
</dbReference>
<dbReference type="SUPFAM" id="SSF143800">
    <property type="entry name" value="L28p-like"/>
    <property type="match status" value="1"/>
</dbReference>
<comment type="similarity">
    <text evidence="1">Belongs to the bacterial ribosomal protein bL28 family.</text>
</comment>
<evidence type="ECO:0000255" key="1">
    <source>
        <dbReference type="HAMAP-Rule" id="MF_00373"/>
    </source>
</evidence>
<evidence type="ECO:0000305" key="2"/>
<organism>
    <name type="scientific">Brucella melitensis biotype 2 (strain ATCC 23457)</name>
    <dbReference type="NCBI Taxonomy" id="546272"/>
    <lineage>
        <taxon>Bacteria</taxon>
        <taxon>Pseudomonadati</taxon>
        <taxon>Pseudomonadota</taxon>
        <taxon>Alphaproteobacteria</taxon>
        <taxon>Hyphomicrobiales</taxon>
        <taxon>Brucellaceae</taxon>
        <taxon>Brucella/Ochrobactrum group</taxon>
        <taxon>Brucella</taxon>
    </lineage>
</organism>
<feature type="chain" id="PRO_1000195908" description="Large ribosomal subunit protein bL28">
    <location>
        <begin position="1"/>
        <end position="97"/>
    </location>
</feature>
<gene>
    <name evidence="1" type="primary">rpmB</name>
    <name type="ordered locus">BMEA_A2075</name>
</gene>
<accession>C0RFQ6</accession>